<gene>
    <name type="primary">PGD1</name>
    <name type="synonym">MED3</name>
    <name type="ordered locus">KLLA0E10615g</name>
</gene>
<evidence type="ECO:0000250" key="1"/>
<evidence type="ECO:0000256" key="2">
    <source>
        <dbReference type="SAM" id="MobiDB-lite"/>
    </source>
</evidence>
<evidence type="ECO:0000305" key="3"/>
<dbReference type="EMBL" id="CR382125">
    <property type="protein sequence ID" value="CAG99517.1"/>
    <property type="molecule type" value="Genomic_DNA"/>
</dbReference>
<dbReference type="RefSeq" id="XP_454430.1">
    <property type="nucleotide sequence ID" value="XM_454430.1"/>
</dbReference>
<dbReference type="SMR" id="Q6CNQ9"/>
<dbReference type="STRING" id="284590.Q6CNQ9"/>
<dbReference type="PaxDb" id="284590-Q6CNQ9"/>
<dbReference type="KEGG" id="kla:KLLA0_E10627g"/>
<dbReference type="eggNOG" id="ENOG502S3GT">
    <property type="taxonomic scope" value="Eukaryota"/>
</dbReference>
<dbReference type="HOGENOM" id="CLU_049224_0_0_1"/>
<dbReference type="InParanoid" id="Q6CNQ9"/>
<dbReference type="OMA" id="FIQIMAN"/>
<dbReference type="Proteomes" id="UP000000598">
    <property type="component" value="Chromosome E"/>
</dbReference>
<dbReference type="GO" id="GO:0016592">
    <property type="term" value="C:mediator complex"/>
    <property type="evidence" value="ECO:0007669"/>
    <property type="project" value="InterPro"/>
</dbReference>
<dbReference type="GO" id="GO:0003712">
    <property type="term" value="F:transcription coregulator activity"/>
    <property type="evidence" value="ECO:0007669"/>
    <property type="project" value="InterPro"/>
</dbReference>
<dbReference type="GO" id="GO:0006357">
    <property type="term" value="P:regulation of transcription by RNA polymerase II"/>
    <property type="evidence" value="ECO:0007669"/>
    <property type="project" value="InterPro"/>
</dbReference>
<dbReference type="InterPro" id="IPR020998">
    <property type="entry name" value="Med3"/>
</dbReference>
<dbReference type="Pfam" id="PF11593">
    <property type="entry name" value="Med3"/>
    <property type="match status" value="1"/>
</dbReference>
<name>MED3_KLULA</name>
<sequence>MAVGPPDQIFKDNLTFDTFRELIIEKESTADEVADKVLEAKKALLPIRTLMTEFVGMIANLESMGNKTSQEKFLAIRMKLIELQNNIQKFSKDFQQLQPVMRTMDKFNEEVNAGEKKFFVQETLGYTQLASNGSAAGITKTSSGNDGNTTGSTANTMAMAKGLKKNAAGKPNTGTGVQSGPGRRNSTKKTGHTGPATAPTTSNSAASAAAAAANTPSLKQIPNTQPMQLMPGVSPMAMASPLNNISPQRKLTQHVNQSRENSLHQGVTPSASMITPQNILNMSAFDLNQNQTPQSLDNVNNMDLTNLDLDSLNMEFLN</sequence>
<feature type="chain" id="PRO_0000302018" description="Mediator of RNA polymerase II transcription subunit 3">
    <location>
        <begin position="1"/>
        <end position="318"/>
    </location>
</feature>
<feature type="region of interest" description="Disordered" evidence="2">
    <location>
        <begin position="134"/>
        <end position="225"/>
    </location>
</feature>
<feature type="compositionally biased region" description="Polar residues" evidence="2">
    <location>
        <begin position="134"/>
        <end position="156"/>
    </location>
</feature>
<feature type="compositionally biased region" description="Low complexity" evidence="2">
    <location>
        <begin position="192"/>
        <end position="217"/>
    </location>
</feature>
<comment type="function">
    <text evidence="1">Component of the Mediator complex, a coactivator involved in regulated gene transcription of nearly all RNA polymerase II-dependent genes. Mediator functions as a bridge to convey information from gene-specific regulatory proteins to the basal RNA polymerase II transcription machinery. Mediator is recruited to promoters by direct interactions with regulatory proteins and serves as a scaffold for the assembly of a functional preinitiation complex with RNA polymerase II and the general transcription factors (By similarity).</text>
</comment>
<comment type="subunit">
    <text evidence="1">Component of the Mediator complex.</text>
</comment>
<comment type="subcellular location">
    <subcellularLocation>
        <location evidence="1">Nucleus</location>
    </subcellularLocation>
</comment>
<comment type="similarity">
    <text evidence="3">Belongs to the Mediator complex subunit 3 family.</text>
</comment>
<reference key="1">
    <citation type="journal article" date="2004" name="Nature">
        <title>Genome evolution in yeasts.</title>
        <authorList>
            <person name="Dujon B."/>
            <person name="Sherman D."/>
            <person name="Fischer G."/>
            <person name="Durrens P."/>
            <person name="Casaregola S."/>
            <person name="Lafontaine I."/>
            <person name="de Montigny J."/>
            <person name="Marck C."/>
            <person name="Neuveglise C."/>
            <person name="Talla E."/>
            <person name="Goffard N."/>
            <person name="Frangeul L."/>
            <person name="Aigle M."/>
            <person name="Anthouard V."/>
            <person name="Babour A."/>
            <person name="Barbe V."/>
            <person name="Barnay S."/>
            <person name="Blanchin S."/>
            <person name="Beckerich J.-M."/>
            <person name="Beyne E."/>
            <person name="Bleykasten C."/>
            <person name="Boisrame A."/>
            <person name="Boyer J."/>
            <person name="Cattolico L."/>
            <person name="Confanioleri F."/>
            <person name="de Daruvar A."/>
            <person name="Despons L."/>
            <person name="Fabre E."/>
            <person name="Fairhead C."/>
            <person name="Ferry-Dumazet H."/>
            <person name="Groppi A."/>
            <person name="Hantraye F."/>
            <person name="Hennequin C."/>
            <person name="Jauniaux N."/>
            <person name="Joyet P."/>
            <person name="Kachouri R."/>
            <person name="Kerrest A."/>
            <person name="Koszul R."/>
            <person name="Lemaire M."/>
            <person name="Lesur I."/>
            <person name="Ma L."/>
            <person name="Muller H."/>
            <person name="Nicaud J.-M."/>
            <person name="Nikolski M."/>
            <person name="Oztas S."/>
            <person name="Ozier-Kalogeropoulos O."/>
            <person name="Pellenz S."/>
            <person name="Potier S."/>
            <person name="Richard G.-F."/>
            <person name="Straub M.-L."/>
            <person name="Suleau A."/>
            <person name="Swennen D."/>
            <person name="Tekaia F."/>
            <person name="Wesolowski-Louvel M."/>
            <person name="Westhof E."/>
            <person name="Wirth B."/>
            <person name="Zeniou-Meyer M."/>
            <person name="Zivanovic Y."/>
            <person name="Bolotin-Fukuhara M."/>
            <person name="Thierry A."/>
            <person name="Bouchier C."/>
            <person name="Caudron B."/>
            <person name="Scarpelli C."/>
            <person name="Gaillardin C."/>
            <person name="Weissenbach J."/>
            <person name="Wincker P."/>
            <person name="Souciet J.-L."/>
        </authorList>
    </citation>
    <scope>NUCLEOTIDE SEQUENCE [LARGE SCALE GENOMIC DNA]</scope>
    <source>
        <strain>ATCC 8585 / CBS 2359 / DSM 70799 / NBRC 1267 / NRRL Y-1140 / WM37</strain>
    </source>
</reference>
<proteinExistence type="inferred from homology"/>
<protein>
    <recommendedName>
        <fullName>Mediator of RNA polymerase II transcription subunit 3</fullName>
    </recommendedName>
    <alternativeName>
        <fullName>Mediator complex subunit 3</fullName>
    </alternativeName>
</protein>
<organism>
    <name type="scientific">Kluyveromyces lactis (strain ATCC 8585 / CBS 2359 / DSM 70799 / NBRC 1267 / NRRL Y-1140 / WM37)</name>
    <name type="common">Yeast</name>
    <name type="synonym">Candida sphaerica</name>
    <dbReference type="NCBI Taxonomy" id="284590"/>
    <lineage>
        <taxon>Eukaryota</taxon>
        <taxon>Fungi</taxon>
        <taxon>Dikarya</taxon>
        <taxon>Ascomycota</taxon>
        <taxon>Saccharomycotina</taxon>
        <taxon>Saccharomycetes</taxon>
        <taxon>Saccharomycetales</taxon>
        <taxon>Saccharomycetaceae</taxon>
        <taxon>Kluyveromyces</taxon>
    </lineage>
</organism>
<keyword id="KW-0010">Activator</keyword>
<keyword id="KW-0539">Nucleus</keyword>
<keyword id="KW-1185">Reference proteome</keyword>
<keyword id="KW-0804">Transcription</keyword>
<keyword id="KW-0805">Transcription regulation</keyword>
<accession>Q6CNQ9</accession>